<evidence type="ECO:0000250" key="1"/>
<evidence type="ECO:0000255" key="2">
    <source>
        <dbReference type="PROSITE-ProRule" id="PRU10066"/>
    </source>
</evidence>
<evidence type="ECO:0000305" key="3"/>
<gene>
    <name type="primary">GANC</name>
    <name type="ORF">QflA-12512</name>
</gene>
<feature type="chain" id="PRO_0000185365" description="Neutral alpha-glucosidase C">
    <location>
        <begin position="1" status="less than"/>
        <end position="769"/>
    </location>
</feature>
<feature type="active site" description="Nucleophile" evidence="2">
    <location>
        <position position="366"/>
    </location>
</feature>
<feature type="active site" evidence="1">
    <location>
        <position position="369"/>
    </location>
</feature>
<feature type="active site" description="Proton donor" evidence="1">
    <location>
        <position position="442"/>
    </location>
</feature>
<feature type="non-terminal residue">
    <location>
        <position position="1"/>
    </location>
</feature>
<comment type="function">
    <text evidence="1">Has alpha-glucosidase activity.</text>
</comment>
<comment type="catalytic activity">
    <reaction>
        <text>Hydrolysis of terminal, non-reducing (1-&gt;4)-linked alpha-D-glucose residues with release of alpha-D-glucose.</text>
        <dbReference type="EC" id="3.2.1.20"/>
    </reaction>
</comment>
<comment type="similarity">
    <text evidence="3">Belongs to the glycosyl hydrolase 31 family.</text>
</comment>
<comment type="sequence caution" evidence="3">
    <conflict type="erroneous initiation">
        <sequence resource="EMBL-CDS" id="BAB39324"/>
    </conflict>
</comment>
<sequence>EEEVVISINSLGQLYFEHLQILHKQRAAKENEEEASVDTSQENQEDLGLWEEKFGKFVDIKANGPSSIGLDFSLHGFEHLYGIPQHAESHQLKNTGDEDAYRLYNLDVYGYQIYDKMGIYGSVPYLLAHKLGRTIGIFWLNASETLVEINTEPAVEYTLSQMGPVAAKQKVRSRTHVHWMSESGIIDVFLLTGPTPSDVFKQYSHLTGTQAMPPLFSLGYHQCRWNYEDEQDVKAVDAGFDEHDIPYDAMWLDIEHTEGKRYFTWDKKRFPNPERMQELLRSKKRKLVVISDPHIKIDPDYSVYVKAKDQGFFVKNQEGEDFEGVCWPGLSSYLDFTNPKVREWYSSLFAFPVYQGSTDILFLWNDMNEPSVFRRPEQTMQKNAIHHGNWEHRELHNIYGFYHQMATAEGLIQRSGGKERPFVLTRSFFAGSQKYGAVWTGDNTAEWSYLKISIPMLLTLSITGISFCGADIGGFIGNPETELLVRWYQAGAYQPFFRGHATMNAKRREPWLFGKEHTRLIREAIRERYGLLPYWYSLFYHAHVASQPVMRPLWVEFPDELKTFDMEDEYMLGSALLVHPVTEPKATTVDVFLPGSNEVWYDYKTFAHWEGGCTVKIPVALDTIPVFQRGGSVVPIKTTVGKSTGWMTESSYGLRVALSTKGSSVGELYLDDGHSFQYLHQKQFLHRKFSFCSSVLINSSADQRGHYPSKCVVEQILVLGLRKEPSFVTTHSSDGKDQPVAFTYCAKTSSLSLEKLSLNIATDWEVRII</sequence>
<proteinExistence type="evidence at transcript level"/>
<reference key="1">
    <citation type="journal article" date="2002" name="Genome Biol.">
        <title>Prediction of unidentified human genes on the basis of sequence similarity to novel cDNAs from cynomolgus monkey brain.</title>
        <authorList>
            <person name="Osada N."/>
            <person name="Hida M."/>
            <person name="Kusuda J."/>
            <person name="Tanuma R."/>
            <person name="Hirata M."/>
            <person name="Hirai M."/>
            <person name="Terao K."/>
            <person name="Suzuki Y."/>
            <person name="Sugano S."/>
            <person name="Hashimoto K."/>
        </authorList>
    </citation>
    <scope>NUCLEOTIDE SEQUENCE [LARGE SCALE MRNA]</scope>
    <source>
        <tissue>Frontal cortex</tissue>
    </source>
</reference>
<dbReference type="EC" id="3.2.1.20"/>
<dbReference type="EMBL" id="AB056800">
    <property type="protein sequence ID" value="BAB39324.1"/>
    <property type="status" value="ALT_INIT"/>
    <property type="molecule type" value="mRNA"/>
</dbReference>
<dbReference type="SMR" id="Q9BE70"/>
<dbReference type="STRING" id="9541.ENSMFAP00000030552"/>
<dbReference type="CAZy" id="GH31">
    <property type="family name" value="Glycoside Hydrolase Family 31"/>
</dbReference>
<dbReference type="eggNOG" id="KOG1066">
    <property type="taxonomic scope" value="Eukaryota"/>
</dbReference>
<dbReference type="Proteomes" id="UP000233100">
    <property type="component" value="Unplaced"/>
</dbReference>
<dbReference type="GO" id="GO:0004558">
    <property type="term" value="F:alpha-1,4-glucosidase activity"/>
    <property type="evidence" value="ECO:0007669"/>
    <property type="project" value="UniProtKB-EC"/>
</dbReference>
<dbReference type="GO" id="GO:0030246">
    <property type="term" value="F:carbohydrate binding"/>
    <property type="evidence" value="ECO:0007669"/>
    <property type="project" value="InterPro"/>
</dbReference>
<dbReference type="GO" id="GO:0005975">
    <property type="term" value="P:carbohydrate metabolic process"/>
    <property type="evidence" value="ECO:0007669"/>
    <property type="project" value="InterPro"/>
</dbReference>
<dbReference type="GO" id="GO:0006491">
    <property type="term" value="P:N-glycan processing"/>
    <property type="evidence" value="ECO:0007669"/>
    <property type="project" value="TreeGrafter"/>
</dbReference>
<dbReference type="CDD" id="cd06603">
    <property type="entry name" value="GH31_GANC_GANAB_alpha"/>
    <property type="match status" value="1"/>
</dbReference>
<dbReference type="CDD" id="cd14752">
    <property type="entry name" value="GH31_N"/>
    <property type="match status" value="1"/>
</dbReference>
<dbReference type="FunFam" id="3.20.20.80:FF:000046">
    <property type="entry name" value="Glucosidase alpha, neutral C"/>
    <property type="match status" value="1"/>
</dbReference>
<dbReference type="FunFam" id="3.20.20.80:FF:000039">
    <property type="entry name" value="Glucosidase, alpha neutral C"/>
    <property type="match status" value="1"/>
</dbReference>
<dbReference type="FunFam" id="2.60.40.1180:FF:000023">
    <property type="entry name" value="neutral alpha-glucosidase AB isoform X2"/>
    <property type="match status" value="1"/>
</dbReference>
<dbReference type="Gene3D" id="3.20.20.80">
    <property type="entry name" value="Glycosidases"/>
    <property type="match status" value="2"/>
</dbReference>
<dbReference type="Gene3D" id="2.60.40.1760">
    <property type="entry name" value="glycosyl hydrolase (family 31)"/>
    <property type="match status" value="1"/>
</dbReference>
<dbReference type="Gene3D" id="2.60.40.1180">
    <property type="entry name" value="Golgi alpha-mannosidase II"/>
    <property type="match status" value="2"/>
</dbReference>
<dbReference type="InterPro" id="IPR011013">
    <property type="entry name" value="Gal_mutarotase_sf_dom"/>
</dbReference>
<dbReference type="InterPro" id="IPR030458">
    <property type="entry name" value="Glyco_hydro_31_AS"/>
</dbReference>
<dbReference type="InterPro" id="IPR048395">
    <property type="entry name" value="Glyco_hydro_31_C"/>
</dbReference>
<dbReference type="InterPro" id="IPR025887">
    <property type="entry name" value="Glyco_hydro_31_N_dom"/>
</dbReference>
<dbReference type="InterPro" id="IPR000322">
    <property type="entry name" value="Glyco_hydro_31_TIM"/>
</dbReference>
<dbReference type="InterPro" id="IPR013780">
    <property type="entry name" value="Glyco_hydro_b"/>
</dbReference>
<dbReference type="InterPro" id="IPR017853">
    <property type="entry name" value="Glycoside_hydrolase_SF"/>
</dbReference>
<dbReference type="PANTHER" id="PTHR22762">
    <property type="entry name" value="ALPHA-GLUCOSIDASE"/>
    <property type="match status" value="1"/>
</dbReference>
<dbReference type="PANTHER" id="PTHR22762:SF60">
    <property type="entry name" value="NEUTRAL ALPHA-GLUCOSIDASE C"/>
    <property type="match status" value="1"/>
</dbReference>
<dbReference type="Pfam" id="PF13802">
    <property type="entry name" value="Gal_mutarotas_2"/>
    <property type="match status" value="1"/>
</dbReference>
<dbReference type="Pfam" id="PF01055">
    <property type="entry name" value="Glyco_hydro_31_2nd"/>
    <property type="match status" value="1"/>
</dbReference>
<dbReference type="Pfam" id="PF21365">
    <property type="entry name" value="Glyco_hydro_31_3rd"/>
    <property type="match status" value="1"/>
</dbReference>
<dbReference type="SUPFAM" id="SSF51445">
    <property type="entry name" value="(Trans)glycosidases"/>
    <property type="match status" value="1"/>
</dbReference>
<dbReference type="SUPFAM" id="SSF74650">
    <property type="entry name" value="Galactose mutarotase-like"/>
    <property type="match status" value="1"/>
</dbReference>
<dbReference type="SUPFAM" id="SSF51011">
    <property type="entry name" value="Glycosyl hydrolase domain"/>
    <property type="match status" value="1"/>
</dbReference>
<dbReference type="PROSITE" id="PS00129">
    <property type="entry name" value="GLYCOSYL_HYDROL_F31_1"/>
    <property type="match status" value="1"/>
</dbReference>
<organism>
    <name type="scientific">Macaca fascicularis</name>
    <name type="common">Crab-eating macaque</name>
    <name type="synonym">Cynomolgus monkey</name>
    <dbReference type="NCBI Taxonomy" id="9541"/>
    <lineage>
        <taxon>Eukaryota</taxon>
        <taxon>Metazoa</taxon>
        <taxon>Chordata</taxon>
        <taxon>Craniata</taxon>
        <taxon>Vertebrata</taxon>
        <taxon>Euteleostomi</taxon>
        <taxon>Mammalia</taxon>
        <taxon>Eutheria</taxon>
        <taxon>Euarchontoglires</taxon>
        <taxon>Primates</taxon>
        <taxon>Haplorrhini</taxon>
        <taxon>Catarrhini</taxon>
        <taxon>Cercopithecidae</taxon>
        <taxon>Cercopithecinae</taxon>
        <taxon>Macaca</taxon>
    </lineage>
</organism>
<protein>
    <recommendedName>
        <fullName>Neutral alpha-glucosidase C</fullName>
        <ecNumber>3.2.1.20</ecNumber>
    </recommendedName>
</protein>
<name>GANC_MACFA</name>
<accession>Q9BE70</accession>
<keyword id="KW-0326">Glycosidase</keyword>
<keyword id="KW-0378">Hydrolase</keyword>
<keyword id="KW-1185">Reference proteome</keyword>